<gene>
    <name type="primary">rilpl1</name>
    <name type="ORF">zgc:158490</name>
</gene>
<dbReference type="EMBL" id="BC127600">
    <property type="protein sequence ID" value="AAI27601.1"/>
    <property type="status" value="ALT_INIT"/>
    <property type="molecule type" value="mRNA"/>
</dbReference>
<dbReference type="RefSeq" id="NP_001073132.2">
    <property type="nucleotide sequence ID" value="NM_001079664.1"/>
</dbReference>
<dbReference type="SMR" id="A0PJT0"/>
<dbReference type="FunCoup" id="A0PJT0">
    <property type="interactions" value="1159"/>
</dbReference>
<dbReference type="PaxDb" id="7955-ENSDARP00000108755"/>
<dbReference type="GeneID" id="780843"/>
<dbReference type="KEGG" id="dre:780843"/>
<dbReference type="AGR" id="ZFIN:ZDB-GENE-061201-51"/>
<dbReference type="CTD" id="353116"/>
<dbReference type="ZFIN" id="ZDB-GENE-061201-51">
    <property type="gene designation" value="rilpl1"/>
</dbReference>
<dbReference type="eggNOG" id="ENOG502QR9G">
    <property type="taxonomic scope" value="Eukaryota"/>
</dbReference>
<dbReference type="InParanoid" id="A0PJT0"/>
<dbReference type="OrthoDB" id="10069524at2759"/>
<dbReference type="PhylomeDB" id="A0PJT0"/>
<dbReference type="PRO" id="PR:A0PJT0"/>
<dbReference type="Proteomes" id="UP000000437">
    <property type="component" value="Chromosome 10"/>
</dbReference>
<dbReference type="GO" id="GO:0005813">
    <property type="term" value="C:centrosome"/>
    <property type="evidence" value="ECO:0000250"/>
    <property type="project" value="UniProtKB"/>
</dbReference>
<dbReference type="GO" id="GO:0036064">
    <property type="term" value="C:ciliary basal body"/>
    <property type="evidence" value="ECO:0000318"/>
    <property type="project" value="GO_Central"/>
</dbReference>
<dbReference type="GO" id="GO:0005929">
    <property type="term" value="C:cilium"/>
    <property type="evidence" value="ECO:0000250"/>
    <property type="project" value="UniProtKB"/>
</dbReference>
<dbReference type="GO" id="GO:0005737">
    <property type="term" value="C:cytoplasm"/>
    <property type="evidence" value="ECO:0000318"/>
    <property type="project" value="GO_Central"/>
</dbReference>
<dbReference type="GO" id="GO:0005829">
    <property type="term" value="C:cytosol"/>
    <property type="evidence" value="ECO:0000250"/>
    <property type="project" value="UniProtKB"/>
</dbReference>
<dbReference type="GO" id="GO:0016020">
    <property type="term" value="C:membrane"/>
    <property type="evidence" value="ECO:0007669"/>
    <property type="project" value="GOC"/>
</dbReference>
<dbReference type="GO" id="GO:0051959">
    <property type="term" value="F:dynein light intermediate chain binding"/>
    <property type="evidence" value="ECO:0000318"/>
    <property type="project" value="GO_Central"/>
</dbReference>
<dbReference type="GO" id="GO:0046983">
    <property type="term" value="F:protein dimerization activity"/>
    <property type="evidence" value="ECO:0007669"/>
    <property type="project" value="InterPro"/>
</dbReference>
<dbReference type="GO" id="GO:0031267">
    <property type="term" value="F:small GTPase binding"/>
    <property type="evidence" value="ECO:0000318"/>
    <property type="project" value="GO_Central"/>
</dbReference>
<dbReference type="GO" id="GO:0060271">
    <property type="term" value="P:cilium assembly"/>
    <property type="evidence" value="ECO:0000318"/>
    <property type="project" value="GO_Central"/>
</dbReference>
<dbReference type="GO" id="GO:0003382">
    <property type="term" value="P:epithelial cell morphogenesis"/>
    <property type="evidence" value="ECO:0000250"/>
    <property type="project" value="UniProtKB"/>
</dbReference>
<dbReference type="GO" id="GO:0007263">
    <property type="term" value="P:nitric oxide mediated signal transduction"/>
    <property type="evidence" value="ECO:0000250"/>
    <property type="project" value="UniProtKB"/>
</dbReference>
<dbReference type="GO" id="GO:1903445">
    <property type="term" value="P:protein transport from ciliary membrane to plasma membrane"/>
    <property type="evidence" value="ECO:0000250"/>
    <property type="project" value="UniProtKB"/>
</dbReference>
<dbReference type="CDD" id="cd14445">
    <property type="entry name" value="RILP-like"/>
    <property type="match status" value="1"/>
</dbReference>
<dbReference type="Gene3D" id="1.20.58.1770">
    <property type="match status" value="1"/>
</dbReference>
<dbReference type="Gene3D" id="6.10.230.10">
    <property type="match status" value="1"/>
</dbReference>
<dbReference type="InterPro" id="IPR051241">
    <property type="entry name" value="DZIP_RILPL"/>
</dbReference>
<dbReference type="InterPro" id="IPR034743">
    <property type="entry name" value="RH1"/>
</dbReference>
<dbReference type="InterPro" id="IPR034744">
    <property type="entry name" value="RH2"/>
</dbReference>
<dbReference type="InterPro" id="IPR021563">
    <property type="entry name" value="RILP_dimer"/>
</dbReference>
<dbReference type="PANTHER" id="PTHR21502:SF6">
    <property type="entry name" value="RILP-LIKE PROTEIN 1"/>
    <property type="match status" value="1"/>
</dbReference>
<dbReference type="PANTHER" id="PTHR21502">
    <property type="entry name" value="ZINC FINGER PROTEIN DZIP1"/>
    <property type="match status" value="1"/>
</dbReference>
<dbReference type="Pfam" id="PF09744">
    <property type="entry name" value="RH1"/>
    <property type="match status" value="1"/>
</dbReference>
<dbReference type="Pfam" id="PF11461">
    <property type="entry name" value="RILP"/>
    <property type="match status" value="1"/>
</dbReference>
<dbReference type="SUPFAM" id="SSF161256">
    <property type="entry name" value="RILP dimerisation region"/>
    <property type="match status" value="1"/>
</dbReference>
<dbReference type="PROSITE" id="PS51776">
    <property type="entry name" value="RH1"/>
    <property type="match status" value="1"/>
</dbReference>
<dbReference type="PROSITE" id="PS51777">
    <property type="entry name" value="RH2"/>
    <property type="match status" value="1"/>
</dbReference>
<feature type="chain" id="PRO_0000299312" description="RILP-like protein 1">
    <location>
        <begin position="1"/>
        <end position="406"/>
    </location>
</feature>
<feature type="domain" description="RH1" evidence="3">
    <location>
        <begin position="5"/>
        <end position="99"/>
    </location>
</feature>
<feature type="domain" description="RH2" evidence="4">
    <location>
        <begin position="289"/>
        <end position="358"/>
    </location>
</feature>
<feature type="region of interest" description="Disordered" evidence="5">
    <location>
        <begin position="234"/>
        <end position="272"/>
    </location>
</feature>
<feature type="region of interest" description="Disordered" evidence="5">
    <location>
        <begin position="323"/>
        <end position="351"/>
    </location>
</feature>
<feature type="coiled-coil region" evidence="2">
    <location>
        <begin position="105"/>
        <end position="319"/>
    </location>
</feature>
<feature type="compositionally biased region" description="Basic and acidic residues" evidence="5">
    <location>
        <begin position="241"/>
        <end position="257"/>
    </location>
</feature>
<feature type="compositionally biased region" description="Polar residues" evidence="5">
    <location>
        <begin position="340"/>
        <end position="351"/>
    </location>
</feature>
<proteinExistence type="evidence at transcript level"/>
<keyword id="KW-0966">Cell projection</keyword>
<keyword id="KW-0969">Cilium</keyword>
<keyword id="KW-0175">Coiled coil</keyword>
<keyword id="KW-0963">Cytoplasm</keyword>
<keyword id="KW-0206">Cytoskeleton</keyword>
<keyword id="KW-0653">Protein transport</keyword>
<keyword id="KW-1185">Reference proteome</keyword>
<keyword id="KW-0813">Transport</keyword>
<name>RIPL1_DANRE</name>
<protein>
    <recommendedName>
        <fullName>RILP-like protein 1</fullName>
    </recommendedName>
    <alternativeName>
        <fullName>Rab-interacting lysosomal-like protein 1</fullName>
    </alternativeName>
</protein>
<comment type="function">
    <text evidence="1">Plays a role in the regulation of cell shape and polarity. Plays a role in cellular protein transport, including protein transport away from primary cilia. Neuroprotective protein (By similarity).</text>
</comment>
<comment type="subcellular location">
    <subcellularLocation>
        <location evidence="1">Cytoplasm</location>
        <location evidence="1">Cytosol</location>
    </subcellularLocation>
    <subcellularLocation>
        <location evidence="1">Cytoplasm</location>
        <location evidence="1">Cytoskeleton</location>
        <location evidence="1">Microtubule organizing center</location>
        <location evidence="1">Centrosome</location>
    </subcellularLocation>
    <subcellularLocation>
        <location evidence="1">Cell projection</location>
        <location evidence="1">Cilium</location>
    </subcellularLocation>
</comment>
<comment type="similarity">
    <text evidence="6">Belongs to the RILPL family.</text>
</comment>
<comment type="sequence caution" evidence="6">
    <conflict type="erroneous initiation">
        <sequence resource="EMBL-CDS" id="AAI27601"/>
    </conflict>
</comment>
<organism>
    <name type="scientific">Danio rerio</name>
    <name type="common">Zebrafish</name>
    <name type="synonym">Brachydanio rerio</name>
    <dbReference type="NCBI Taxonomy" id="7955"/>
    <lineage>
        <taxon>Eukaryota</taxon>
        <taxon>Metazoa</taxon>
        <taxon>Chordata</taxon>
        <taxon>Craniata</taxon>
        <taxon>Vertebrata</taxon>
        <taxon>Euteleostomi</taxon>
        <taxon>Actinopterygii</taxon>
        <taxon>Neopterygii</taxon>
        <taxon>Teleostei</taxon>
        <taxon>Ostariophysi</taxon>
        <taxon>Cypriniformes</taxon>
        <taxon>Danionidae</taxon>
        <taxon>Danioninae</taxon>
        <taxon>Danio</taxon>
    </lineage>
</organism>
<reference key="1">
    <citation type="submission" date="2006-11" db="EMBL/GenBank/DDBJ databases">
        <authorList>
            <consortium name="NIH - Zebrafish Gene Collection (ZGC) project"/>
        </authorList>
    </citation>
    <scope>NUCLEOTIDE SEQUENCE [LARGE SCALE MRNA]</scope>
    <source>
        <tissue>Embryo</tissue>
    </source>
</reference>
<evidence type="ECO:0000250" key="1"/>
<evidence type="ECO:0000255" key="2"/>
<evidence type="ECO:0000255" key="3">
    <source>
        <dbReference type="PROSITE-ProRule" id="PRU01112"/>
    </source>
</evidence>
<evidence type="ECO:0000255" key="4">
    <source>
        <dbReference type="PROSITE-ProRule" id="PRU01113"/>
    </source>
</evidence>
<evidence type="ECO:0000256" key="5">
    <source>
        <dbReference type="SAM" id="MobiDB-lite"/>
    </source>
</evidence>
<evidence type="ECO:0000305" key="6"/>
<accession>A0PJT0</accession>
<sequence>MEEQQLGAALDKSAAELSVMDVYDIAAALGLELERVIERTGAELLSRLVPRVVRVLELLEVLVSRSSSSPDTDELRLELDRLRLERLERLEKEKKHKKELELVEDVWRGEAQDLLCQISQLQEENKTLLNNLSIRESPLTEEDIQKQEGMTERERQVMKKLKEVVDKQRDEIRAKDRELTLKNDDVEALQQQMSRLMKINQDVRHRVSVVEAQGKSLIQQKVELEAAAQTQQQEVSSLRQEVSRLKEKLKEQSRSNEEEAQEPVGPPSPAQEALCDEDLSTVDLKDPNRPRFTLQELRDVLHERNELKAKVFMLQEEIAYYRSEEQEEENGPPLPDPSETLRTNPRSNFQPESGIKRLFSFFSRDRSVSQRRMMLNVEPVGDAVGSWTGKQEDVYTETAQEALQHM</sequence>